<sequence length="218" mass="22831">MANLTTLAVSTRAKAGKGAARATRREGLVPAVIYGGKQEPSIIALDPRVIMKELHRGGWSSRVYNLAAEGAEPVAALIRDVQLHPVTDAPIHVDFQRVAAGTKVHVEVSIAFVGEEKSPGIKRGGVLNVVRHYVDVQADPANIPEHFTAELSGLDIHDNVRWTDLKGTEGVVLGSGQAADMVIASIAAPTIDAEMEAEAAAKAAAEAEAAAKPGAKKK</sequence>
<organism>
    <name type="scientific">Gluconobacter oxydans (strain 621H)</name>
    <name type="common">Gluconobacter suboxydans</name>
    <dbReference type="NCBI Taxonomy" id="290633"/>
    <lineage>
        <taxon>Bacteria</taxon>
        <taxon>Pseudomonadati</taxon>
        <taxon>Pseudomonadota</taxon>
        <taxon>Alphaproteobacteria</taxon>
        <taxon>Acetobacterales</taxon>
        <taxon>Acetobacteraceae</taxon>
        <taxon>Gluconobacter</taxon>
    </lineage>
</organism>
<keyword id="KW-1185">Reference proteome</keyword>
<keyword id="KW-0687">Ribonucleoprotein</keyword>
<keyword id="KW-0689">Ribosomal protein</keyword>
<keyword id="KW-0694">RNA-binding</keyword>
<keyword id="KW-0699">rRNA-binding</keyword>
<dbReference type="EMBL" id="CP000009">
    <property type="protein sequence ID" value="AAW60908.1"/>
    <property type="molecule type" value="Genomic_DNA"/>
</dbReference>
<dbReference type="RefSeq" id="WP_011252700.1">
    <property type="nucleotide sequence ID" value="NC_006677.1"/>
</dbReference>
<dbReference type="SMR" id="Q5FRT8"/>
<dbReference type="STRING" id="290633.GOX1141"/>
<dbReference type="KEGG" id="gox:GOX1141"/>
<dbReference type="eggNOG" id="COG1825">
    <property type="taxonomic scope" value="Bacteria"/>
</dbReference>
<dbReference type="HOGENOM" id="CLU_075939_0_0_5"/>
<dbReference type="Proteomes" id="UP000006375">
    <property type="component" value="Chromosome"/>
</dbReference>
<dbReference type="GO" id="GO:0022625">
    <property type="term" value="C:cytosolic large ribosomal subunit"/>
    <property type="evidence" value="ECO:0007669"/>
    <property type="project" value="TreeGrafter"/>
</dbReference>
<dbReference type="GO" id="GO:0008097">
    <property type="term" value="F:5S rRNA binding"/>
    <property type="evidence" value="ECO:0007669"/>
    <property type="project" value="InterPro"/>
</dbReference>
<dbReference type="GO" id="GO:0003735">
    <property type="term" value="F:structural constituent of ribosome"/>
    <property type="evidence" value="ECO:0007669"/>
    <property type="project" value="InterPro"/>
</dbReference>
<dbReference type="GO" id="GO:0006412">
    <property type="term" value="P:translation"/>
    <property type="evidence" value="ECO:0007669"/>
    <property type="project" value="UniProtKB-UniRule"/>
</dbReference>
<dbReference type="CDD" id="cd00495">
    <property type="entry name" value="Ribosomal_L25_TL5_CTC"/>
    <property type="match status" value="1"/>
</dbReference>
<dbReference type="Gene3D" id="2.170.120.20">
    <property type="entry name" value="Ribosomal protein L25, beta domain"/>
    <property type="match status" value="1"/>
</dbReference>
<dbReference type="Gene3D" id="2.40.240.10">
    <property type="entry name" value="Ribosomal Protein L25, Chain P"/>
    <property type="match status" value="1"/>
</dbReference>
<dbReference type="HAMAP" id="MF_01334">
    <property type="entry name" value="Ribosomal_bL25_CTC"/>
    <property type="match status" value="1"/>
</dbReference>
<dbReference type="InterPro" id="IPR020056">
    <property type="entry name" value="Rbsml_bL25/Gln-tRNA_synth_N"/>
</dbReference>
<dbReference type="InterPro" id="IPR011035">
    <property type="entry name" value="Ribosomal_bL25/Gln-tRNA_synth"/>
</dbReference>
<dbReference type="InterPro" id="IPR020057">
    <property type="entry name" value="Ribosomal_bL25_b-dom"/>
</dbReference>
<dbReference type="InterPro" id="IPR037121">
    <property type="entry name" value="Ribosomal_bL25_C"/>
</dbReference>
<dbReference type="InterPro" id="IPR001021">
    <property type="entry name" value="Ribosomal_bL25_long"/>
</dbReference>
<dbReference type="InterPro" id="IPR029751">
    <property type="entry name" value="Ribosomal_L25_dom"/>
</dbReference>
<dbReference type="InterPro" id="IPR020930">
    <property type="entry name" value="Ribosomal_uL5_bac-type"/>
</dbReference>
<dbReference type="NCBIfam" id="TIGR00731">
    <property type="entry name" value="bL25_bact_ctc"/>
    <property type="match status" value="1"/>
</dbReference>
<dbReference type="NCBIfam" id="NF004128">
    <property type="entry name" value="PRK05618.1-2"/>
    <property type="match status" value="1"/>
</dbReference>
<dbReference type="PANTHER" id="PTHR33284">
    <property type="entry name" value="RIBOSOMAL PROTEIN L25/GLN-TRNA SYNTHETASE, ANTI-CODON-BINDING DOMAIN-CONTAINING PROTEIN"/>
    <property type="match status" value="1"/>
</dbReference>
<dbReference type="PANTHER" id="PTHR33284:SF1">
    <property type="entry name" value="RIBOSOMAL PROTEIN L25_GLN-TRNA SYNTHETASE, ANTI-CODON-BINDING DOMAIN-CONTAINING PROTEIN"/>
    <property type="match status" value="1"/>
</dbReference>
<dbReference type="Pfam" id="PF01386">
    <property type="entry name" value="Ribosomal_L25p"/>
    <property type="match status" value="1"/>
</dbReference>
<dbReference type="Pfam" id="PF14693">
    <property type="entry name" value="Ribosomal_TL5_C"/>
    <property type="match status" value="1"/>
</dbReference>
<dbReference type="SUPFAM" id="SSF50715">
    <property type="entry name" value="Ribosomal protein L25-like"/>
    <property type="match status" value="1"/>
</dbReference>
<accession>Q5FRT8</accession>
<gene>
    <name evidence="1" type="primary">rplY</name>
    <name evidence="1" type="synonym">ctc</name>
    <name type="ordered locus">GOX1141</name>
</gene>
<proteinExistence type="inferred from homology"/>
<name>RL25_GLUOX</name>
<comment type="function">
    <text evidence="1">This is one of the proteins that binds to the 5S RNA in the ribosome where it forms part of the central protuberance.</text>
</comment>
<comment type="subunit">
    <text evidence="1">Part of the 50S ribosomal subunit; part of the 5S rRNA/L5/L18/L25 subcomplex. Contacts the 5S rRNA. Binds to the 5S rRNA independently of L5 and L18.</text>
</comment>
<comment type="similarity">
    <text evidence="1">Belongs to the bacterial ribosomal protein bL25 family. CTC subfamily.</text>
</comment>
<evidence type="ECO:0000255" key="1">
    <source>
        <dbReference type="HAMAP-Rule" id="MF_01334"/>
    </source>
</evidence>
<evidence type="ECO:0000305" key="2"/>
<feature type="chain" id="PRO_0000181552" description="Large ribosomal subunit protein bL25">
    <location>
        <begin position="1"/>
        <end position="218"/>
    </location>
</feature>
<protein>
    <recommendedName>
        <fullName evidence="1">Large ribosomal subunit protein bL25</fullName>
    </recommendedName>
    <alternativeName>
        <fullName evidence="2">50S ribosomal protein L25</fullName>
    </alternativeName>
    <alternativeName>
        <fullName evidence="1">General stress protein CTC</fullName>
    </alternativeName>
</protein>
<reference key="1">
    <citation type="journal article" date="2005" name="Nat. Biotechnol.">
        <title>Complete genome sequence of the acetic acid bacterium Gluconobacter oxydans.</title>
        <authorList>
            <person name="Prust C."/>
            <person name="Hoffmeister M."/>
            <person name="Liesegang H."/>
            <person name="Wiezer A."/>
            <person name="Fricke W.F."/>
            <person name="Ehrenreich A."/>
            <person name="Gottschalk G."/>
            <person name="Deppenmeier U."/>
        </authorList>
    </citation>
    <scope>NUCLEOTIDE SEQUENCE [LARGE SCALE GENOMIC DNA]</scope>
    <source>
        <strain>621H</strain>
    </source>
</reference>